<proteinExistence type="inferred from homology"/>
<organism>
    <name type="scientific">Azotobacter vinelandii (strain DJ / ATCC BAA-1303)</name>
    <dbReference type="NCBI Taxonomy" id="322710"/>
    <lineage>
        <taxon>Bacteria</taxon>
        <taxon>Pseudomonadati</taxon>
        <taxon>Pseudomonadota</taxon>
        <taxon>Gammaproteobacteria</taxon>
        <taxon>Pseudomonadales</taxon>
        <taxon>Pseudomonadaceae</taxon>
        <taxon>Azotobacter</taxon>
    </lineage>
</organism>
<protein>
    <recommendedName>
        <fullName evidence="1">Large ribosomal subunit protein uL13</fullName>
    </recommendedName>
    <alternativeName>
        <fullName evidence="2">50S ribosomal protein L13</fullName>
    </alternativeName>
</protein>
<gene>
    <name evidence="1" type="primary">rplM</name>
    <name type="ordered locus">Avin_13040</name>
</gene>
<dbReference type="EMBL" id="CP001157">
    <property type="protein sequence ID" value="ACO77530.1"/>
    <property type="molecule type" value="Genomic_DNA"/>
</dbReference>
<dbReference type="RefSeq" id="WP_012699950.1">
    <property type="nucleotide sequence ID" value="NC_012560.1"/>
</dbReference>
<dbReference type="SMR" id="C1DQ78"/>
<dbReference type="STRING" id="322710.Avin_13040"/>
<dbReference type="EnsemblBacteria" id="ACO77530">
    <property type="protein sequence ID" value="ACO77530"/>
    <property type="gene ID" value="Avin_13040"/>
</dbReference>
<dbReference type="GeneID" id="88184620"/>
<dbReference type="KEGG" id="avn:Avin_13040"/>
<dbReference type="eggNOG" id="COG0102">
    <property type="taxonomic scope" value="Bacteria"/>
</dbReference>
<dbReference type="HOGENOM" id="CLU_082184_2_2_6"/>
<dbReference type="OrthoDB" id="9801330at2"/>
<dbReference type="Proteomes" id="UP000002424">
    <property type="component" value="Chromosome"/>
</dbReference>
<dbReference type="GO" id="GO:0022625">
    <property type="term" value="C:cytosolic large ribosomal subunit"/>
    <property type="evidence" value="ECO:0007669"/>
    <property type="project" value="TreeGrafter"/>
</dbReference>
<dbReference type="GO" id="GO:0003729">
    <property type="term" value="F:mRNA binding"/>
    <property type="evidence" value="ECO:0007669"/>
    <property type="project" value="TreeGrafter"/>
</dbReference>
<dbReference type="GO" id="GO:0003735">
    <property type="term" value="F:structural constituent of ribosome"/>
    <property type="evidence" value="ECO:0007669"/>
    <property type="project" value="InterPro"/>
</dbReference>
<dbReference type="GO" id="GO:0017148">
    <property type="term" value="P:negative regulation of translation"/>
    <property type="evidence" value="ECO:0007669"/>
    <property type="project" value="TreeGrafter"/>
</dbReference>
<dbReference type="GO" id="GO:0006412">
    <property type="term" value="P:translation"/>
    <property type="evidence" value="ECO:0007669"/>
    <property type="project" value="UniProtKB-UniRule"/>
</dbReference>
<dbReference type="CDD" id="cd00392">
    <property type="entry name" value="Ribosomal_L13"/>
    <property type="match status" value="1"/>
</dbReference>
<dbReference type="FunFam" id="3.90.1180.10:FF:000001">
    <property type="entry name" value="50S ribosomal protein L13"/>
    <property type="match status" value="1"/>
</dbReference>
<dbReference type="Gene3D" id="3.90.1180.10">
    <property type="entry name" value="Ribosomal protein L13"/>
    <property type="match status" value="1"/>
</dbReference>
<dbReference type="HAMAP" id="MF_01366">
    <property type="entry name" value="Ribosomal_uL13"/>
    <property type="match status" value="1"/>
</dbReference>
<dbReference type="InterPro" id="IPR005822">
    <property type="entry name" value="Ribosomal_uL13"/>
</dbReference>
<dbReference type="InterPro" id="IPR005823">
    <property type="entry name" value="Ribosomal_uL13_bac-type"/>
</dbReference>
<dbReference type="InterPro" id="IPR023563">
    <property type="entry name" value="Ribosomal_uL13_CS"/>
</dbReference>
<dbReference type="InterPro" id="IPR036899">
    <property type="entry name" value="Ribosomal_uL13_sf"/>
</dbReference>
<dbReference type="NCBIfam" id="TIGR01066">
    <property type="entry name" value="rplM_bact"/>
    <property type="match status" value="1"/>
</dbReference>
<dbReference type="PANTHER" id="PTHR11545:SF2">
    <property type="entry name" value="LARGE RIBOSOMAL SUBUNIT PROTEIN UL13M"/>
    <property type="match status" value="1"/>
</dbReference>
<dbReference type="PANTHER" id="PTHR11545">
    <property type="entry name" value="RIBOSOMAL PROTEIN L13"/>
    <property type="match status" value="1"/>
</dbReference>
<dbReference type="Pfam" id="PF00572">
    <property type="entry name" value="Ribosomal_L13"/>
    <property type="match status" value="1"/>
</dbReference>
<dbReference type="PIRSF" id="PIRSF002181">
    <property type="entry name" value="Ribosomal_L13"/>
    <property type="match status" value="1"/>
</dbReference>
<dbReference type="SUPFAM" id="SSF52161">
    <property type="entry name" value="Ribosomal protein L13"/>
    <property type="match status" value="1"/>
</dbReference>
<dbReference type="PROSITE" id="PS00783">
    <property type="entry name" value="RIBOSOMAL_L13"/>
    <property type="match status" value="1"/>
</dbReference>
<accession>C1DQ78</accession>
<evidence type="ECO:0000255" key="1">
    <source>
        <dbReference type="HAMAP-Rule" id="MF_01366"/>
    </source>
</evidence>
<evidence type="ECO:0000305" key="2"/>
<comment type="function">
    <text evidence="1">This protein is one of the early assembly proteins of the 50S ribosomal subunit, although it is not seen to bind rRNA by itself. It is important during the early stages of 50S assembly.</text>
</comment>
<comment type="subunit">
    <text evidence="1">Part of the 50S ribosomal subunit.</text>
</comment>
<comment type="similarity">
    <text evidence="1">Belongs to the universal ribosomal protein uL13 family.</text>
</comment>
<name>RL13_AZOVD</name>
<sequence>MKTFTAKPETVKRDWYVVDAAGQTLGRLATEIASRLRGKHKPEYTPHVDTGDYIVVINAEQVRVTGAKSSDKIYYSHSGFPGGIKSISFEKLIAKAPERVIETAVKGMLPKNPLGRDMYRKLKVYKGAVHPHTAQQPQELKI</sequence>
<reference key="1">
    <citation type="journal article" date="2009" name="J. Bacteriol.">
        <title>Genome sequence of Azotobacter vinelandii, an obligate aerobe specialized to support diverse anaerobic metabolic processes.</title>
        <authorList>
            <person name="Setubal J.C."/>
            <person name="Dos Santos P."/>
            <person name="Goldman B.S."/>
            <person name="Ertesvaag H."/>
            <person name="Espin G."/>
            <person name="Rubio L.M."/>
            <person name="Valla S."/>
            <person name="Almeida N.F."/>
            <person name="Balasubramanian D."/>
            <person name="Cromes L."/>
            <person name="Curatti L."/>
            <person name="Du Z."/>
            <person name="Godsy E."/>
            <person name="Goodner B."/>
            <person name="Hellner-Burris K."/>
            <person name="Hernandez J.A."/>
            <person name="Houmiel K."/>
            <person name="Imperial J."/>
            <person name="Kennedy C."/>
            <person name="Larson T.J."/>
            <person name="Latreille P."/>
            <person name="Ligon L.S."/>
            <person name="Lu J."/>
            <person name="Maerk M."/>
            <person name="Miller N.M."/>
            <person name="Norton S."/>
            <person name="O'Carroll I.P."/>
            <person name="Paulsen I."/>
            <person name="Raulfs E.C."/>
            <person name="Roemer R."/>
            <person name="Rosser J."/>
            <person name="Segura D."/>
            <person name="Slater S."/>
            <person name="Stricklin S.L."/>
            <person name="Studholme D.J."/>
            <person name="Sun J."/>
            <person name="Viana C.J."/>
            <person name="Wallin E."/>
            <person name="Wang B."/>
            <person name="Wheeler C."/>
            <person name="Zhu H."/>
            <person name="Dean D.R."/>
            <person name="Dixon R."/>
            <person name="Wood D."/>
        </authorList>
    </citation>
    <scope>NUCLEOTIDE SEQUENCE [LARGE SCALE GENOMIC DNA]</scope>
    <source>
        <strain>DJ / ATCC BAA-1303</strain>
    </source>
</reference>
<feature type="chain" id="PRO_1000214942" description="Large ribosomal subunit protein uL13">
    <location>
        <begin position="1"/>
        <end position="142"/>
    </location>
</feature>
<keyword id="KW-0687">Ribonucleoprotein</keyword>
<keyword id="KW-0689">Ribosomal protein</keyword>